<organism>
    <name type="scientific">Staphylococcus saprophyticus subsp. saprophyticus (strain ATCC 15305 / DSM 20229 / NCIMB 8711 / NCTC 7292 / S-41)</name>
    <dbReference type="NCBI Taxonomy" id="342451"/>
    <lineage>
        <taxon>Bacteria</taxon>
        <taxon>Bacillati</taxon>
        <taxon>Bacillota</taxon>
        <taxon>Bacilli</taxon>
        <taxon>Bacillales</taxon>
        <taxon>Staphylococcaceae</taxon>
        <taxon>Staphylococcus</taxon>
    </lineage>
</organism>
<gene>
    <name evidence="1" type="primary">pcp</name>
    <name type="ordered locus">SSP0471</name>
</gene>
<keyword id="KW-0963">Cytoplasm</keyword>
<keyword id="KW-0378">Hydrolase</keyword>
<keyword id="KW-0645">Protease</keyword>
<keyword id="KW-1185">Reference proteome</keyword>
<keyword id="KW-0788">Thiol protease</keyword>
<reference key="1">
    <citation type="journal article" date="2005" name="Proc. Natl. Acad. Sci. U.S.A.">
        <title>Whole genome sequence of Staphylococcus saprophyticus reveals the pathogenesis of uncomplicated urinary tract infection.</title>
        <authorList>
            <person name="Kuroda M."/>
            <person name="Yamashita A."/>
            <person name="Hirakawa H."/>
            <person name="Kumano M."/>
            <person name="Morikawa K."/>
            <person name="Higashide M."/>
            <person name="Maruyama A."/>
            <person name="Inose Y."/>
            <person name="Matoba K."/>
            <person name="Toh H."/>
            <person name="Kuhara S."/>
            <person name="Hattori M."/>
            <person name="Ohta T."/>
        </authorList>
    </citation>
    <scope>NUCLEOTIDE SEQUENCE [LARGE SCALE GENOMIC DNA]</scope>
    <source>
        <strain>ATCC 15305 / DSM 20229 / NCIMB 8711 / NCTC 7292 / S-41</strain>
    </source>
</reference>
<evidence type="ECO:0000255" key="1">
    <source>
        <dbReference type="HAMAP-Rule" id="MF_00417"/>
    </source>
</evidence>
<accession>Q4A002</accession>
<comment type="function">
    <text evidence="1">Removes 5-oxoproline from various penultimate amino acid residues except L-proline.</text>
</comment>
<comment type="catalytic activity">
    <reaction evidence="1">
        <text>Release of an N-terminal pyroglutamyl group from a polypeptide, the second amino acid generally not being Pro.</text>
        <dbReference type="EC" id="3.4.19.3"/>
    </reaction>
</comment>
<comment type="subunit">
    <text evidence="1">Homotetramer.</text>
</comment>
<comment type="subcellular location">
    <subcellularLocation>
        <location evidence="1">Cytoplasm</location>
    </subcellularLocation>
</comment>
<comment type="similarity">
    <text evidence="1">Belongs to the peptidase C15 family.</text>
</comment>
<proteinExistence type="inferred from homology"/>
<name>PCP_STAS1</name>
<dbReference type="EC" id="3.4.19.3" evidence="1"/>
<dbReference type="EMBL" id="AP008934">
    <property type="protein sequence ID" value="BAE17616.1"/>
    <property type="molecule type" value="Genomic_DNA"/>
</dbReference>
<dbReference type="RefSeq" id="WP_002482427.1">
    <property type="nucleotide sequence ID" value="NZ_MTGA01000036.1"/>
</dbReference>
<dbReference type="SMR" id="Q4A002"/>
<dbReference type="MEROPS" id="C15.001"/>
<dbReference type="GeneID" id="3616219"/>
<dbReference type="KEGG" id="ssp:SSP0471"/>
<dbReference type="PATRIC" id="fig|342451.11.peg.476"/>
<dbReference type="eggNOG" id="COG2039">
    <property type="taxonomic scope" value="Bacteria"/>
</dbReference>
<dbReference type="HOGENOM" id="CLU_043960_4_0_9"/>
<dbReference type="OrthoDB" id="9779738at2"/>
<dbReference type="Proteomes" id="UP000006371">
    <property type="component" value="Chromosome"/>
</dbReference>
<dbReference type="GO" id="GO:0005829">
    <property type="term" value="C:cytosol"/>
    <property type="evidence" value="ECO:0007669"/>
    <property type="project" value="InterPro"/>
</dbReference>
<dbReference type="GO" id="GO:0016920">
    <property type="term" value="F:pyroglutamyl-peptidase activity"/>
    <property type="evidence" value="ECO:0007669"/>
    <property type="project" value="UniProtKB-UniRule"/>
</dbReference>
<dbReference type="GO" id="GO:0006508">
    <property type="term" value="P:proteolysis"/>
    <property type="evidence" value="ECO:0007669"/>
    <property type="project" value="UniProtKB-KW"/>
</dbReference>
<dbReference type="CDD" id="cd00501">
    <property type="entry name" value="Peptidase_C15"/>
    <property type="match status" value="1"/>
</dbReference>
<dbReference type="FunFam" id="3.40.630.20:FF:000001">
    <property type="entry name" value="Pyrrolidone-carboxylate peptidase"/>
    <property type="match status" value="1"/>
</dbReference>
<dbReference type="Gene3D" id="3.40.630.20">
    <property type="entry name" value="Peptidase C15, pyroglutamyl peptidase I-like"/>
    <property type="match status" value="1"/>
</dbReference>
<dbReference type="HAMAP" id="MF_00417">
    <property type="entry name" value="Pyrrolid_peptidase"/>
    <property type="match status" value="1"/>
</dbReference>
<dbReference type="InterPro" id="IPR000816">
    <property type="entry name" value="Peptidase_C15"/>
</dbReference>
<dbReference type="InterPro" id="IPR016125">
    <property type="entry name" value="Peptidase_C15-like"/>
</dbReference>
<dbReference type="InterPro" id="IPR036440">
    <property type="entry name" value="Peptidase_C15-like_sf"/>
</dbReference>
<dbReference type="InterPro" id="IPR029762">
    <property type="entry name" value="PGP-I_bact-type"/>
</dbReference>
<dbReference type="InterPro" id="IPR033694">
    <property type="entry name" value="PGPEP1_Cys_AS"/>
</dbReference>
<dbReference type="InterPro" id="IPR033693">
    <property type="entry name" value="PGPEP1_Glu_AS"/>
</dbReference>
<dbReference type="NCBIfam" id="NF009676">
    <property type="entry name" value="PRK13197.1"/>
    <property type="match status" value="1"/>
</dbReference>
<dbReference type="NCBIfam" id="TIGR00504">
    <property type="entry name" value="pyro_pdase"/>
    <property type="match status" value="1"/>
</dbReference>
<dbReference type="PANTHER" id="PTHR23402">
    <property type="entry name" value="PROTEASE FAMILY C15 PYROGLUTAMYL-PEPTIDASE I-RELATED"/>
    <property type="match status" value="1"/>
</dbReference>
<dbReference type="PANTHER" id="PTHR23402:SF1">
    <property type="entry name" value="PYROGLUTAMYL-PEPTIDASE I"/>
    <property type="match status" value="1"/>
</dbReference>
<dbReference type="Pfam" id="PF01470">
    <property type="entry name" value="Peptidase_C15"/>
    <property type="match status" value="1"/>
</dbReference>
<dbReference type="PIRSF" id="PIRSF015592">
    <property type="entry name" value="Prld-crbxl_pptds"/>
    <property type="match status" value="1"/>
</dbReference>
<dbReference type="PRINTS" id="PR00706">
    <property type="entry name" value="PYROGLUPTASE"/>
</dbReference>
<dbReference type="SUPFAM" id="SSF53182">
    <property type="entry name" value="Pyrrolidone carboxyl peptidase (pyroglutamate aminopeptidase)"/>
    <property type="match status" value="1"/>
</dbReference>
<dbReference type="PROSITE" id="PS01334">
    <property type="entry name" value="PYRASE_CYS"/>
    <property type="match status" value="1"/>
</dbReference>
<dbReference type="PROSITE" id="PS01333">
    <property type="entry name" value="PYRASE_GLU"/>
    <property type="match status" value="1"/>
</dbReference>
<sequence>MRILITGFDPFGGERVNPALEAVKLLPDEIGAHKIDKLEIPTVFHKSKDVILSQMKRYEYDIVLAIGQAGGRYELTPERVGINVDDARIADNEGNQPIDEVIQVDGNAAYFSNLPVKRITEAIKAQGIPSRLSNTAGTFVCNHILYQLGYLQATAFPKIKFGFIHVPFVPEQVTDKPEKPSMSLETIRIGLYAALEAIVESGEDIKVALGETH</sequence>
<feature type="chain" id="PRO_1000050142" description="Pyrrolidone-carboxylate peptidase">
    <location>
        <begin position="1"/>
        <end position="213"/>
    </location>
</feature>
<feature type="active site" evidence="1">
    <location>
        <position position="78"/>
    </location>
</feature>
<feature type="active site" evidence="1">
    <location>
        <position position="141"/>
    </location>
</feature>
<feature type="active site" evidence="1">
    <location>
        <position position="165"/>
    </location>
</feature>
<protein>
    <recommendedName>
        <fullName evidence="1">Pyrrolidone-carboxylate peptidase</fullName>
        <ecNumber evidence="1">3.4.19.3</ecNumber>
    </recommendedName>
    <alternativeName>
        <fullName evidence="1">5-oxoprolyl-peptidase</fullName>
    </alternativeName>
    <alternativeName>
        <fullName evidence="1">Pyroglutamyl-peptidase I</fullName>
        <shortName evidence="1">PGP-I</shortName>
        <shortName evidence="1">Pyrase</shortName>
    </alternativeName>
</protein>